<organismHost>
    <name type="scientific">Aves</name>
    <dbReference type="NCBI Taxonomy" id="8782"/>
</organismHost>
<organismHost>
    <name type="scientific">Cetacea</name>
    <name type="common">whales</name>
    <dbReference type="NCBI Taxonomy" id="9721"/>
</organismHost>
<reference key="1">
    <citation type="journal article" date="1989" name="Virology">
        <title>Antigenic and molecular characterization of subtype H13 hemagglutinin of influenza virus.</title>
        <authorList>
            <person name="Chambers T.M."/>
            <person name="Yamnikova S."/>
            <person name="Kawaoka Y."/>
            <person name="Lvov D.K."/>
            <person name="Webster R.G."/>
        </authorList>
    </citation>
    <scope>NUCLEOTIDE SEQUENCE [GENOMIC RNA]</scope>
</reference>
<keyword id="KW-1167">Clathrin- and caveolin-independent endocytosis of virus by host</keyword>
<keyword id="KW-1165">Clathrin-mediated endocytosis of virus by host</keyword>
<keyword id="KW-1015">Disulfide bond</keyword>
<keyword id="KW-1170">Fusion of virus membrane with host endosomal membrane</keyword>
<keyword id="KW-1168">Fusion of virus membrane with host membrane</keyword>
<keyword id="KW-0325">Glycoprotein</keyword>
<keyword id="KW-0348">Hemagglutinin</keyword>
<keyword id="KW-1032">Host cell membrane</keyword>
<keyword id="KW-1043">Host membrane</keyword>
<keyword id="KW-0945">Host-virus interaction</keyword>
<keyword id="KW-0449">Lipoprotein</keyword>
<keyword id="KW-0472">Membrane</keyword>
<keyword id="KW-0564">Palmitate</keyword>
<keyword id="KW-0732">Signal</keyword>
<keyword id="KW-0812">Transmembrane</keyword>
<keyword id="KW-1133">Transmembrane helix</keyword>
<keyword id="KW-1161">Viral attachment to host cell</keyword>
<keyword id="KW-0261">Viral envelope protein</keyword>
<keyword id="KW-1162">Viral penetration into host cytoplasm</keyword>
<keyword id="KW-0946">Virion</keyword>
<keyword id="KW-1164">Virus endocytosis by host</keyword>
<keyword id="KW-1160">Virus entry into host cell</keyword>
<comment type="function">
    <text>Binds to sialic acid-containing receptors on the cell surface, bringing about the attachment of the virus particle to the cell. This attachment induces virion internalization of about two third of the virus particles through clathrin-dependent endocytosis and about one third through a clathrin- and caveolin-independent pathway. Plays a major role in the determination of host range restriction and virulence. Class I viral fusion protein. Responsible for penetration of the virus into the cell cytoplasm by mediating the fusion of the membrane of the endocytosed virus particle with the endosomal membrane. Low pH in endosomes induces an irreversible conformational change in HA2, releasing the fusion hydrophobic peptide. Several trimers are required to form a competent fusion pore.</text>
</comment>
<comment type="function">
    <text evidence="1">Binds to sialic acid-containing receptors on the cell surface, bringing about the attachment of the virus particle to the cell. This attachment induces virion internalization either through clathrin-dependent endocytosis or through clathrin- and caveolin-independent pathway. Plays a major role in the determination of host range restriction and virulence. Class I viral fusion protein. Responsible for penetration of the virus into the cell cytoplasm by mediating the fusion of the membrane of the endocytosed virus particle with the endosomal membrane. Low pH in endosomes induces an irreversible conformational change in HA2, releasing the fusion hydrophobic peptide. Several trimers are required to form a competent fusion pore.</text>
</comment>
<comment type="subunit">
    <text evidence="1">Homotrimer of disulfide-linked HA1-HA2.</text>
</comment>
<comment type="subcellular location">
    <subcellularLocation>
        <location evidence="1">Virion membrane</location>
        <topology evidence="1">Single-pass type I membrane protein</topology>
    </subcellularLocation>
    <subcellularLocation>
        <location evidence="1">Host apical cell membrane</location>
        <topology evidence="1">Single-pass type I membrane protein</topology>
    </subcellularLocation>
    <text evidence="1">Targeted to the apical plasma membrane in epithelial polarized cells through a signal present in the transmembrane domain. Associated with glycosphingolipid- and cholesterol-enriched detergent-resistant lipid rafts.</text>
</comment>
<comment type="PTM">
    <text evidence="1">Palmitoylated.</text>
</comment>
<comment type="PTM">
    <text evidence="1">In natural infection, inactive HA is matured into HA1 and HA2 outside the cell by one or more trypsin-like, arginine-specific endoprotease secreted by the bronchial epithelial cells. One identified protease that may be involved in this process is secreted in lungs by club cells.</text>
</comment>
<comment type="miscellaneous">
    <text>Major glycoprotein, comprises over 80% of the envelope proteins present in virus particle.</text>
</comment>
<comment type="miscellaneous">
    <text>The extent of infection into host organism is determined by HA. Influenza viruses bud from the apical surface of polarized epithelial cells (e.g. bronchial epithelial cells) into lumen of lungs and are therefore usually pneumotropic. The reason is that HA is cleaved by tryptase clara which is restricted to lungs. However, HAs of H5 and H7 pantropic avian viruses subtypes can be cleaved by furin and subtilisin-type enzymes, allowing the virus to grow in other organs than lungs.</text>
</comment>
<comment type="miscellaneous">
    <text evidence="2">The influenza A genome consist of 8 RNA segments. Genetic variation of hemagglutinin and/or neuraminidase genes results in the emergence of new influenza strains. The mechanism of variation can be the result of point mutations or the result of genetic reassortment between segments of two different strains.</text>
</comment>
<comment type="similarity">
    <text evidence="1">Belongs to the influenza viruses hemagglutinin family.</text>
</comment>
<organism>
    <name type="scientific">Influenza A virus (strain A/Whale/Maine/328/1984 H13N2)</name>
    <dbReference type="NCBI Taxonomy" id="385593"/>
    <lineage>
        <taxon>Viruses</taxon>
        <taxon>Riboviria</taxon>
        <taxon>Orthornavirae</taxon>
        <taxon>Negarnaviricota</taxon>
        <taxon>Polyploviricotina</taxon>
        <taxon>Insthoviricetes</taxon>
        <taxon>Articulavirales</taxon>
        <taxon>Orthomyxoviridae</taxon>
        <taxon>Alphainfluenzavirus</taxon>
        <taxon>Alphainfluenzavirus influenzae</taxon>
        <taxon>Influenza A virus</taxon>
    </lineage>
</organism>
<sequence length="566" mass="63049">MDIRPIIISLLISTCVQADRICVGYLSTNSTEKVDTLLENDVPVTSSIDLVETNHTGTYCSLDGISPVHLGDCSFEGWIVGNPACTSNFGIREWSYLIEDPSAPHGLCYPGELDNNGELRHLFSGIRSFSRTELIAPTSWGEVNDGATSACRDNTGTNSFYRNLVWFVKKGNSYPVISRTYNNTTGRDVLVMWGLHHPVSTDETKSLYVNSDPYTLVSTSSWSKKYKLETGVRPGYNGQRSWMKIYWVLMHPGESITFESNGGLLAPRYGYIIEEYGKGRIFQSPIRIARCNTRCQTSVGGINTNKTFQNIERNALGNCPKYIKSGQLKLATGLRNVPAISNRGLFGAIAGFIEGGWPGLINGWYGFQHQNEQGVGIAADKESTQKAIDQITTKINNIIDKMNGNYDSIRGEFSQVEQRINMLADRIDDAVTDVWSYNAKLLVLLENDKTLDMHDANVRNLHEQVRRTLKANAIDEGNGCFELLHKCNDSCMDTIRNGTYNHAEYAEESKLKRQEIEGIKLKSEDNVYKALSIYSCIASSVVLVGLILAFIMWACSSGNCRFNVCI</sequence>
<feature type="signal peptide" evidence="1">
    <location>
        <begin position="1"/>
        <end position="18"/>
    </location>
</feature>
<feature type="chain" id="PRO_0000440507" description="Hemagglutinin" evidence="1">
    <location>
        <begin position="19"/>
        <end position="566"/>
    </location>
</feature>
<feature type="chain" id="PRO_0000039067" description="Hemagglutinin HA1 chain" evidence="1">
    <location>
        <begin position="19"/>
        <end position="342"/>
    </location>
</feature>
<feature type="chain" id="PRO_0000039068" description="Hemagglutinin HA2 chain" evidence="1">
    <location>
        <begin position="344"/>
        <end position="566"/>
    </location>
</feature>
<feature type="topological domain" description="Extracellular" evidence="1">
    <location>
        <begin position="19"/>
        <end position="532"/>
    </location>
</feature>
<feature type="transmembrane region" description="Helical" evidence="1">
    <location>
        <begin position="533"/>
        <end position="553"/>
    </location>
</feature>
<feature type="topological domain" description="Cytoplasmic" evidence="1">
    <location>
        <begin position="554"/>
        <end position="566"/>
    </location>
</feature>
<feature type="site" description="Cleavage; by host" evidence="1">
    <location>
        <begin position="343"/>
        <end position="344"/>
    </location>
</feature>
<feature type="lipid moiety-binding region" description="S-palmitoyl cysteine; by host" evidence="1">
    <location>
        <position position="555"/>
    </location>
</feature>
<feature type="lipid moiety-binding region" description="S-palmitoyl cysteine; by host" evidence="1">
    <location>
        <position position="565"/>
    </location>
</feature>
<feature type="glycosylation site" description="N-linked (GlcNAc...) asparagine; by host" evidence="1">
    <location>
        <position position="29"/>
    </location>
</feature>
<feature type="glycosylation site" description="N-linked (GlcNAc...) asparagine; by host" evidence="1">
    <location>
        <position position="54"/>
    </location>
</feature>
<feature type="glycosylation site" description="N-linked (GlcNAc...) asparagine; by host" evidence="1">
    <location>
        <position position="182"/>
    </location>
</feature>
<feature type="glycosylation site" description="N-linked (GlcNAc...) asparagine; by host" evidence="1">
    <location>
        <position position="183"/>
    </location>
</feature>
<feature type="glycosylation site" description="N-linked (GlcNAc...) asparagine; by host" evidence="1">
    <location>
        <position position="305"/>
    </location>
</feature>
<feature type="glycosylation site" description="N-linked (GlcNAc...) asparagine; by host" evidence="1">
    <location>
        <position position="488"/>
    </location>
</feature>
<feature type="glycosylation site" description="N-linked (GlcNAc...) asparagine; by host" evidence="1">
    <location>
        <position position="497"/>
    </location>
</feature>
<feature type="disulfide bond" description="Interchain (between HA1 and HA2 chains)" evidence="1">
    <location>
        <begin position="22"/>
        <end position="480"/>
    </location>
</feature>
<feature type="disulfide bond" evidence="1">
    <location>
        <begin position="60"/>
        <end position="291"/>
    </location>
</feature>
<feature type="disulfide bond" evidence="1">
    <location>
        <begin position="73"/>
        <end position="85"/>
    </location>
</feature>
<feature type="disulfide bond" evidence="1">
    <location>
        <begin position="108"/>
        <end position="151"/>
    </location>
</feature>
<feature type="disulfide bond" evidence="1">
    <location>
        <begin position="295"/>
        <end position="319"/>
    </location>
</feature>
<feature type="disulfide bond" evidence="1">
    <location>
        <begin position="487"/>
        <end position="491"/>
    </location>
</feature>
<gene>
    <name evidence="1" type="primary">HA</name>
</gene>
<protein>
    <recommendedName>
        <fullName evidence="1">Hemagglutinin</fullName>
    </recommendedName>
    <component>
        <recommendedName>
            <fullName evidence="1">Hemagglutinin HA1 chain</fullName>
        </recommendedName>
    </component>
    <component>
        <recommendedName>
            <fullName evidence="1">Hemagglutinin HA2 chain</fullName>
        </recommendedName>
    </component>
</protein>
<accession>P13102</accession>
<dbReference type="EMBL" id="M26091">
    <property type="protein sequence ID" value="AAA43215.1"/>
    <property type="molecule type" value="Genomic_RNA"/>
</dbReference>
<dbReference type="SMR" id="P13102"/>
<dbReference type="GlyCosmos" id="P13102">
    <property type="glycosylation" value="7 sites, No reported glycans"/>
</dbReference>
<dbReference type="GO" id="GO:0020002">
    <property type="term" value="C:host cell plasma membrane"/>
    <property type="evidence" value="ECO:0007669"/>
    <property type="project" value="UniProtKB-SubCell"/>
</dbReference>
<dbReference type="GO" id="GO:0016020">
    <property type="term" value="C:membrane"/>
    <property type="evidence" value="ECO:0007669"/>
    <property type="project" value="UniProtKB-UniRule"/>
</dbReference>
<dbReference type="GO" id="GO:0019031">
    <property type="term" value="C:viral envelope"/>
    <property type="evidence" value="ECO:0007669"/>
    <property type="project" value="UniProtKB-UniRule"/>
</dbReference>
<dbReference type="GO" id="GO:0055036">
    <property type="term" value="C:virion membrane"/>
    <property type="evidence" value="ECO:0007669"/>
    <property type="project" value="UniProtKB-SubCell"/>
</dbReference>
<dbReference type="GO" id="GO:0046789">
    <property type="term" value="F:host cell surface receptor binding"/>
    <property type="evidence" value="ECO:0007669"/>
    <property type="project" value="UniProtKB-UniRule"/>
</dbReference>
<dbReference type="GO" id="GO:0075512">
    <property type="term" value="P:clathrin-dependent endocytosis of virus by host cell"/>
    <property type="evidence" value="ECO:0007669"/>
    <property type="project" value="UniProtKB-UniRule"/>
</dbReference>
<dbReference type="GO" id="GO:0039654">
    <property type="term" value="P:fusion of virus membrane with host endosome membrane"/>
    <property type="evidence" value="ECO:0007669"/>
    <property type="project" value="UniProtKB-UniRule"/>
</dbReference>
<dbReference type="GO" id="GO:0019064">
    <property type="term" value="P:fusion of virus membrane with host plasma membrane"/>
    <property type="evidence" value="ECO:0007669"/>
    <property type="project" value="InterPro"/>
</dbReference>
<dbReference type="GO" id="GO:0046761">
    <property type="term" value="P:viral budding from plasma membrane"/>
    <property type="evidence" value="ECO:0007669"/>
    <property type="project" value="UniProtKB-UniRule"/>
</dbReference>
<dbReference type="GO" id="GO:0019062">
    <property type="term" value="P:virion attachment to host cell"/>
    <property type="evidence" value="ECO:0007669"/>
    <property type="project" value="UniProtKB-KW"/>
</dbReference>
<dbReference type="Gene3D" id="3.90.20.10">
    <property type="match status" value="1"/>
</dbReference>
<dbReference type="Gene3D" id="3.90.209.20">
    <property type="match status" value="1"/>
</dbReference>
<dbReference type="HAMAP" id="MF_04072">
    <property type="entry name" value="INFV_HEMA"/>
    <property type="match status" value="1"/>
</dbReference>
<dbReference type="InterPro" id="IPR008980">
    <property type="entry name" value="Capsid_hemagglutn"/>
</dbReference>
<dbReference type="InterPro" id="IPR013828">
    <property type="entry name" value="Hemagglutn_HA1_a/b_dom_sf"/>
</dbReference>
<dbReference type="InterPro" id="IPR000149">
    <property type="entry name" value="Hemagglutn_influenz_A"/>
</dbReference>
<dbReference type="InterPro" id="IPR001364">
    <property type="entry name" value="Hemagglutn_influenz_A/B"/>
</dbReference>
<dbReference type="Pfam" id="PF00509">
    <property type="entry name" value="Hemagglutinin"/>
    <property type="match status" value="1"/>
</dbReference>
<dbReference type="PRINTS" id="PR00330">
    <property type="entry name" value="HEMAGGLUTN1"/>
</dbReference>
<dbReference type="PRINTS" id="PR00329">
    <property type="entry name" value="HEMAGGLUTN12"/>
</dbReference>
<dbReference type="SUPFAM" id="SSF58064">
    <property type="entry name" value="Influenza hemagglutinin (stalk)"/>
    <property type="match status" value="1"/>
</dbReference>
<dbReference type="SUPFAM" id="SSF49818">
    <property type="entry name" value="Viral protein domain"/>
    <property type="match status" value="1"/>
</dbReference>
<name>HEMA_I84A2</name>
<proteinExistence type="inferred from homology"/>
<evidence type="ECO:0000255" key="1">
    <source>
        <dbReference type="HAMAP-Rule" id="MF_04072"/>
    </source>
</evidence>
<evidence type="ECO:0000305" key="2"/>